<protein>
    <recommendedName>
        <fullName evidence="1">Large ribosomal subunit protein bL31</fullName>
    </recommendedName>
    <alternativeName>
        <fullName evidence="3">50S ribosomal protein L31</fullName>
    </alternativeName>
</protein>
<accession>Q5SJE1</accession>
<evidence type="ECO:0000255" key="1">
    <source>
        <dbReference type="HAMAP-Rule" id="MF_00501"/>
    </source>
</evidence>
<evidence type="ECO:0000269" key="2">
    <source>
    </source>
</evidence>
<evidence type="ECO:0000305" key="3"/>
<evidence type="ECO:0007829" key="4">
    <source>
        <dbReference type="PDB" id="4WT8"/>
    </source>
</evidence>
<name>RL31_THET8</name>
<organism>
    <name type="scientific">Thermus thermophilus (strain ATCC 27634 / DSM 579 / HB8)</name>
    <dbReference type="NCBI Taxonomy" id="300852"/>
    <lineage>
        <taxon>Bacteria</taxon>
        <taxon>Thermotogati</taxon>
        <taxon>Deinococcota</taxon>
        <taxon>Deinococci</taxon>
        <taxon>Thermales</taxon>
        <taxon>Thermaceae</taxon>
        <taxon>Thermus</taxon>
    </lineage>
</organism>
<proteinExistence type="evidence at protein level"/>
<gene>
    <name evidence="1" type="primary">rpmE</name>
    <name type="ordered locus">TTHA1073</name>
</gene>
<comment type="function">
    <text evidence="1">Binds the 23S rRNA.</text>
</comment>
<comment type="cofactor">
    <cofactor evidence="1">
        <name>Zn(2+)</name>
        <dbReference type="ChEBI" id="CHEBI:29105"/>
    </cofactor>
    <text evidence="1">Binds 1 zinc ion per subunit.</text>
</comment>
<comment type="subunit">
    <text evidence="1">Part of the 50S ribosomal subunit.</text>
</comment>
<comment type="mass spectrometry"/>
<comment type="similarity">
    <text evidence="1">Belongs to the bacterial ribosomal protein bL31 family. Type A subfamily.</text>
</comment>
<feature type="chain" id="PRO_0000173171" description="Large ribosomal subunit protein bL31">
    <location>
        <begin position="1"/>
        <end position="71"/>
    </location>
</feature>
<feature type="binding site" evidence="1">
    <location>
        <position position="16"/>
    </location>
    <ligand>
        <name>Zn(2+)</name>
        <dbReference type="ChEBI" id="CHEBI:29105"/>
    </ligand>
</feature>
<feature type="binding site" evidence="1">
    <location>
        <position position="18"/>
    </location>
    <ligand>
        <name>Zn(2+)</name>
        <dbReference type="ChEBI" id="CHEBI:29105"/>
    </ligand>
</feature>
<feature type="binding site" evidence="1">
    <location>
        <position position="36"/>
    </location>
    <ligand>
        <name>Zn(2+)</name>
        <dbReference type="ChEBI" id="CHEBI:29105"/>
    </ligand>
</feature>
<feature type="binding site" evidence="1">
    <location>
        <position position="39"/>
    </location>
    <ligand>
        <name>Zn(2+)</name>
        <dbReference type="ChEBI" id="CHEBI:29105"/>
    </ligand>
</feature>
<feature type="strand" evidence="4">
    <location>
        <begin position="11"/>
        <end position="16"/>
    </location>
</feature>
<feature type="strand" evidence="4">
    <location>
        <begin position="21"/>
        <end position="25"/>
    </location>
</feature>
<feature type="strand" evidence="4">
    <location>
        <begin position="27"/>
        <end position="34"/>
    </location>
</feature>
<sequence>MKEGIHPKLVPARIICGCGNVIETYSTKPEIYVEVCSKCHPFYTGQQRFVDTEGRVERFQRRYGDSYRKGR</sequence>
<keyword id="KW-0002">3D-structure</keyword>
<keyword id="KW-0479">Metal-binding</keyword>
<keyword id="KW-1185">Reference proteome</keyword>
<keyword id="KW-0687">Ribonucleoprotein</keyword>
<keyword id="KW-0689">Ribosomal protein</keyword>
<keyword id="KW-0694">RNA-binding</keyword>
<keyword id="KW-0699">rRNA-binding</keyword>
<keyword id="KW-0862">Zinc</keyword>
<dbReference type="EMBL" id="AP008226">
    <property type="protein sequence ID" value="BAD70896.1"/>
    <property type="molecule type" value="Genomic_DNA"/>
</dbReference>
<dbReference type="RefSeq" id="WP_008632496.1">
    <property type="nucleotide sequence ID" value="NC_006461.1"/>
</dbReference>
<dbReference type="RefSeq" id="YP_144339.1">
    <property type="nucleotide sequence ID" value="NC_006461.1"/>
</dbReference>
<dbReference type="PDB" id="1VVJ">
    <property type="method" value="X-ray"/>
    <property type="resolution" value="3.44 A"/>
    <property type="chains" value="R4/Y4=1-71"/>
</dbReference>
<dbReference type="PDB" id="1VY4">
    <property type="method" value="X-ray"/>
    <property type="resolution" value="2.60 A"/>
    <property type="chains" value="B4/D4=1-71"/>
</dbReference>
<dbReference type="PDB" id="1VY5">
    <property type="method" value="X-ray"/>
    <property type="resolution" value="2.55 A"/>
    <property type="chains" value="B4/D4=1-71"/>
</dbReference>
<dbReference type="PDB" id="1VY6">
    <property type="method" value="X-ray"/>
    <property type="resolution" value="2.90 A"/>
    <property type="chains" value="B4/D4=1-71"/>
</dbReference>
<dbReference type="PDB" id="1VY7">
    <property type="method" value="X-ray"/>
    <property type="resolution" value="2.80 A"/>
    <property type="chains" value="B4/D4=1-71"/>
</dbReference>
<dbReference type="PDB" id="4L47">
    <property type="method" value="X-ray"/>
    <property type="resolution" value="3.22 A"/>
    <property type="chains" value="R4/Y4=1-71"/>
</dbReference>
<dbReference type="PDB" id="4L71">
    <property type="method" value="X-ray"/>
    <property type="resolution" value="3.90 A"/>
    <property type="chains" value="R4/Y4=1-71"/>
</dbReference>
<dbReference type="PDB" id="4LEL">
    <property type="method" value="X-ray"/>
    <property type="resolution" value="3.90 A"/>
    <property type="chains" value="R4/Y4=1-71"/>
</dbReference>
<dbReference type="PDB" id="4LFZ">
    <property type="method" value="X-ray"/>
    <property type="resolution" value="3.92 A"/>
    <property type="chains" value="R4/Y4=1-71"/>
</dbReference>
<dbReference type="PDB" id="4LNT">
    <property type="method" value="X-ray"/>
    <property type="resolution" value="2.94 A"/>
    <property type="chains" value="R4/Y4=1-71"/>
</dbReference>
<dbReference type="PDB" id="4LSK">
    <property type="method" value="X-ray"/>
    <property type="resolution" value="3.48 A"/>
    <property type="chains" value="R4/Y4=1-71"/>
</dbReference>
<dbReference type="PDB" id="4LT8">
    <property type="method" value="X-ray"/>
    <property type="resolution" value="3.14 A"/>
    <property type="chains" value="R4/Y4=1-71"/>
</dbReference>
<dbReference type="PDB" id="4P6F">
    <property type="method" value="X-ray"/>
    <property type="resolution" value="3.60 A"/>
    <property type="chains" value="R4/Y4=1-71"/>
</dbReference>
<dbReference type="PDB" id="4P70">
    <property type="method" value="X-ray"/>
    <property type="resolution" value="3.68 A"/>
    <property type="chains" value="R4/Y4=1-71"/>
</dbReference>
<dbReference type="PDB" id="4TUA">
    <property type="method" value="X-ray"/>
    <property type="resolution" value="3.60 A"/>
    <property type="chains" value="R4/Y4=1-71"/>
</dbReference>
<dbReference type="PDB" id="4TUB">
    <property type="method" value="X-ray"/>
    <property type="resolution" value="3.60 A"/>
    <property type="chains" value="R4/Y4=1-71"/>
</dbReference>
<dbReference type="PDB" id="4TUC">
    <property type="method" value="X-ray"/>
    <property type="resolution" value="3.60 A"/>
    <property type="chains" value="R4/Y4=1-71"/>
</dbReference>
<dbReference type="PDB" id="4TUD">
    <property type="method" value="X-ray"/>
    <property type="resolution" value="3.60 A"/>
    <property type="chains" value="R4/Y4=1-71"/>
</dbReference>
<dbReference type="PDB" id="4TUE">
    <property type="method" value="X-ray"/>
    <property type="resolution" value="3.50 A"/>
    <property type="chains" value="R4/Y4=1-71"/>
</dbReference>
<dbReference type="PDB" id="4V4P">
    <property type="method" value="X-ray"/>
    <property type="resolution" value="5.50 A"/>
    <property type="chains" value="4=48-70"/>
</dbReference>
<dbReference type="PDB" id="4V4X">
    <property type="method" value="X-ray"/>
    <property type="resolution" value="5.00 A"/>
    <property type="chains" value="B3=1-71"/>
</dbReference>
<dbReference type="PDB" id="4V4Y">
    <property type="method" value="X-ray"/>
    <property type="resolution" value="5.50 A"/>
    <property type="chains" value="B3=1-71"/>
</dbReference>
<dbReference type="PDB" id="4V4Z">
    <property type="method" value="X-ray"/>
    <property type="resolution" value="4.51 A"/>
    <property type="chains" value="B3=1-71"/>
</dbReference>
<dbReference type="PDB" id="4V51">
    <property type="method" value="X-ray"/>
    <property type="resolution" value="2.80 A"/>
    <property type="chains" value="B4/D4=1-71"/>
</dbReference>
<dbReference type="PDB" id="4V5A">
    <property type="method" value="X-ray"/>
    <property type="resolution" value="3.50 A"/>
    <property type="chains" value="B4/D4=1-71"/>
</dbReference>
<dbReference type="PDB" id="4V5C">
    <property type="method" value="X-ray"/>
    <property type="resolution" value="3.30 A"/>
    <property type="chains" value="B4/D4=1-71"/>
</dbReference>
<dbReference type="PDB" id="4V5D">
    <property type="method" value="X-ray"/>
    <property type="resolution" value="3.50 A"/>
    <property type="chains" value="B4/D4=1-71"/>
</dbReference>
<dbReference type="PDB" id="4V5E">
    <property type="method" value="X-ray"/>
    <property type="resolution" value="3.45 A"/>
    <property type="chains" value="B4/D4=1-71"/>
</dbReference>
<dbReference type="PDB" id="4V5F">
    <property type="method" value="X-ray"/>
    <property type="resolution" value="3.60 A"/>
    <property type="chains" value="B4/D4=1-71"/>
</dbReference>
<dbReference type="PDB" id="4V5G">
    <property type="method" value="X-ray"/>
    <property type="resolution" value="3.60 A"/>
    <property type="chains" value="B4/D4=1-71"/>
</dbReference>
<dbReference type="PDB" id="4V5J">
    <property type="method" value="X-ray"/>
    <property type="resolution" value="3.10 A"/>
    <property type="chains" value="B4/D4=1-71"/>
</dbReference>
<dbReference type="PDB" id="4V5K">
    <property type="method" value="X-ray"/>
    <property type="resolution" value="3.20 A"/>
    <property type="chains" value="B4/D4=1-71"/>
</dbReference>
<dbReference type="PDB" id="4V5L">
    <property type="method" value="X-ray"/>
    <property type="resolution" value="3.10 A"/>
    <property type="chains" value="B4=1-71"/>
</dbReference>
<dbReference type="PDB" id="4V5M">
    <property type="method" value="EM"/>
    <property type="resolution" value="7.80 A"/>
    <property type="chains" value="B4=1-71"/>
</dbReference>
<dbReference type="PDB" id="4V5N">
    <property type="method" value="EM"/>
    <property type="resolution" value="7.60 A"/>
    <property type="chains" value="B4=1-71"/>
</dbReference>
<dbReference type="PDB" id="4V5P">
    <property type="method" value="X-ray"/>
    <property type="resolution" value="3.10 A"/>
    <property type="chains" value="B4/D4=1-71"/>
</dbReference>
<dbReference type="PDB" id="4V5Q">
    <property type="method" value="X-ray"/>
    <property type="resolution" value="3.10 A"/>
    <property type="chains" value="B4/D4=1-71"/>
</dbReference>
<dbReference type="PDB" id="4V5R">
    <property type="method" value="X-ray"/>
    <property type="resolution" value="3.10 A"/>
    <property type="chains" value="B4/D4=1-71"/>
</dbReference>
<dbReference type="PDB" id="4V5S">
    <property type="method" value="X-ray"/>
    <property type="resolution" value="3.10 A"/>
    <property type="chains" value="B4/D4=1-71"/>
</dbReference>
<dbReference type="PDB" id="4V68">
    <property type="method" value="EM"/>
    <property type="resolution" value="6.40 A"/>
    <property type="chains" value="B4=1-50"/>
</dbReference>
<dbReference type="PDB" id="4V6A">
    <property type="method" value="X-ray"/>
    <property type="resolution" value="3.10 A"/>
    <property type="chains" value="B4/D4=1-71"/>
</dbReference>
<dbReference type="PDB" id="4V6F">
    <property type="method" value="X-ray"/>
    <property type="resolution" value="3.10 A"/>
    <property type="chains" value="A4/D4=1-71"/>
</dbReference>
<dbReference type="PDB" id="4V6G">
    <property type="method" value="X-ray"/>
    <property type="resolution" value="3.50 A"/>
    <property type="chains" value="B4/D4=1-71"/>
</dbReference>
<dbReference type="PDB" id="4V7J">
    <property type="method" value="X-ray"/>
    <property type="resolution" value="3.30 A"/>
    <property type="chains" value="A4/B4=1-71"/>
</dbReference>
<dbReference type="PDB" id="4V7K">
    <property type="method" value="X-ray"/>
    <property type="resolution" value="3.60 A"/>
    <property type="chains" value="A4/B4=1-71"/>
</dbReference>
<dbReference type="PDB" id="4V7L">
    <property type="method" value="X-ray"/>
    <property type="resolution" value="3.00 A"/>
    <property type="chains" value="B4/D4=1-71"/>
</dbReference>
<dbReference type="PDB" id="4V7M">
    <property type="method" value="X-ray"/>
    <property type="resolution" value="3.45 A"/>
    <property type="chains" value="B4/D4=1-71"/>
</dbReference>
<dbReference type="PDB" id="4V7W">
    <property type="method" value="X-ray"/>
    <property type="resolution" value="3.00 A"/>
    <property type="chains" value="B4/D4=1-71"/>
</dbReference>
<dbReference type="PDB" id="4V7X">
    <property type="method" value="X-ray"/>
    <property type="resolution" value="3.00 A"/>
    <property type="chains" value="B4/D4=1-71"/>
</dbReference>
<dbReference type="PDB" id="4V7Y">
    <property type="method" value="X-ray"/>
    <property type="resolution" value="3.00 A"/>
    <property type="chains" value="B4/D4=1-71"/>
</dbReference>
<dbReference type="PDB" id="4V7Z">
    <property type="method" value="X-ray"/>
    <property type="resolution" value="3.10 A"/>
    <property type="chains" value="B4/D4=1-71"/>
</dbReference>
<dbReference type="PDB" id="4V87">
    <property type="method" value="X-ray"/>
    <property type="resolution" value="3.10 A"/>
    <property type="chains" value="A4/D4=1-66"/>
</dbReference>
<dbReference type="PDB" id="4V8A">
    <property type="method" value="X-ray"/>
    <property type="resolution" value="3.20 A"/>
    <property type="chains" value="A4/B4=1-71"/>
</dbReference>
<dbReference type="PDB" id="4V8B">
    <property type="method" value="X-ray"/>
    <property type="resolution" value="3.00 A"/>
    <property type="chains" value="B4/D4=1-71"/>
</dbReference>
<dbReference type="PDB" id="4V8C">
    <property type="method" value="X-ray"/>
    <property type="resolution" value="3.30 A"/>
    <property type="chains" value="A4/B4=1-71"/>
</dbReference>
<dbReference type="PDB" id="4V8D">
    <property type="method" value="X-ray"/>
    <property type="resolution" value="3.00 A"/>
    <property type="chains" value="B4/D4=1-71"/>
</dbReference>
<dbReference type="PDB" id="4V8E">
    <property type="method" value="X-ray"/>
    <property type="resolution" value="3.30 A"/>
    <property type="chains" value="A4/C4=1-71"/>
</dbReference>
<dbReference type="PDB" id="4V8F">
    <property type="method" value="X-ray"/>
    <property type="resolution" value="3.30 A"/>
    <property type="chains" value="A4/D4=1-71"/>
</dbReference>
<dbReference type="PDB" id="4V8G">
    <property type="method" value="X-ray"/>
    <property type="resolution" value="3.00 A"/>
    <property type="chains" value="B4/D4=1-71"/>
</dbReference>
<dbReference type="PDB" id="4V8H">
    <property type="method" value="X-ray"/>
    <property type="resolution" value="3.10 A"/>
    <property type="chains" value="B4/D4=1-71"/>
</dbReference>
<dbReference type="PDB" id="4V8I">
    <property type="method" value="X-ray"/>
    <property type="resolution" value="2.70 A"/>
    <property type="chains" value="B4/D4=1-71"/>
</dbReference>
<dbReference type="PDB" id="4V8J">
    <property type="method" value="X-ray"/>
    <property type="resolution" value="3.90 A"/>
    <property type="chains" value="B4/D4=1-71"/>
</dbReference>
<dbReference type="PDB" id="4V8N">
    <property type="method" value="X-ray"/>
    <property type="resolution" value="3.10 A"/>
    <property type="chains" value="B4/D4=1-71"/>
</dbReference>
<dbReference type="PDB" id="4V8O">
    <property type="method" value="X-ray"/>
    <property type="resolution" value="3.80 A"/>
    <property type="chains" value="B4=1-71"/>
</dbReference>
<dbReference type="PDB" id="4V8Q">
    <property type="method" value="X-ray"/>
    <property type="resolution" value="3.10 A"/>
    <property type="chains" value="A4=1-71"/>
</dbReference>
<dbReference type="PDB" id="4V8U">
    <property type="method" value="X-ray"/>
    <property type="resolution" value="3.70 A"/>
    <property type="chains" value="B4/D4=1-71"/>
</dbReference>
<dbReference type="PDB" id="4V8X">
    <property type="method" value="X-ray"/>
    <property type="resolution" value="3.35 A"/>
    <property type="chains" value="B4/D4=1-71"/>
</dbReference>
<dbReference type="PDB" id="4V90">
    <property type="method" value="X-ray"/>
    <property type="resolution" value="2.95 A"/>
    <property type="chains" value="B4=1-71"/>
</dbReference>
<dbReference type="PDB" id="4V95">
    <property type="method" value="X-ray"/>
    <property type="resolution" value="3.20 A"/>
    <property type="chains" value="B4/D4=1-71"/>
</dbReference>
<dbReference type="PDB" id="4V97">
    <property type="method" value="X-ray"/>
    <property type="resolution" value="3.52 A"/>
    <property type="chains" value="B4/D4=1-71"/>
</dbReference>
<dbReference type="PDB" id="4V9A">
    <property type="method" value="X-ray"/>
    <property type="resolution" value="3.30 A"/>
    <property type="chains" value="B4/D4=1-71"/>
</dbReference>
<dbReference type="PDB" id="4V9B">
    <property type="method" value="X-ray"/>
    <property type="resolution" value="3.10 A"/>
    <property type="chains" value="B4/D4=1-71"/>
</dbReference>
<dbReference type="PDB" id="4V9H">
    <property type="method" value="X-ray"/>
    <property type="resolution" value="2.86 A"/>
    <property type="chains" value="B4=1-71"/>
</dbReference>
<dbReference type="PDB" id="4V9I">
    <property type="method" value="X-ray"/>
    <property type="resolution" value="3.30 A"/>
    <property type="chains" value="B4/D4=10-39"/>
</dbReference>
<dbReference type="PDB" id="4V9R">
    <property type="method" value="X-ray"/>
    <property type="resolution" value="3.00 A"/>
    <property type="chains" value="B4/D4=1-71"/>
</dbReference>
<dbReference type="PDB" id="4V9S">
    <property type="method" value="X-ray"/>
    <property type="resolution" value="3.10 A"/>
    <property type="chains" value="B4/D4=1-71"/>
</dbReference>
<dbReference type="PDB" id="4W2E">
    <property type="method" value="X-ray"/>
    <property type="resolution" value="2.90 A"/>
    <property type="chains" value="4=1-71"/>
</dbReference>
<dbReference type="PDB" id="4W2F">
    <property type="method" value="X-ray"/>
    <property type="resolution" value="2.40 A"/>
    <property type="chains" value="B4/D4=1-71"/>
</dbReference>
<dbReference type="PDB" id="4W2G">
    <property type="method" value="X-ray"/>
    <property type="resolution" value="2.55 A"/>
    <property type="chains" value="B4/D4=1-71"/>
</dbReference>
<dbReference type="PDB" id="4W2H">
    <property type="method" value="X-ray"/>
    <property type="resolution" value="2.70 A"/>
    <property type="chains" value="B4/D4=1-71"/>
</dbReference>
<dbReference type="PDB" id="4W2I">
    <property type="method" value="X-ray"/>
    <property type="resolution" value="2.70 A"/>
    <property type="chains" value="B4/D4=1-71"/>
</dbReference>
<dbReference type="PDB" id="4W4G">
    <property type="method" value="X-ray"/>
    <property type="resolution" value="3.30 A"/>
    <property type="chains" value="R4/Y4=1-71"/>
</dbReference>
<dbReference type="PDB" id="4WPO">
    <property type="method" value="X-ray"/>
    <property type="resolution" value="2.80 A"/>
    <property type="chains" value="A4/C4=1-71"/>
</dbReference>
<dbReference type="PDB" id="4WQ1">
    <property type="method" value="X-ray"/>
    <property type="resolution" value="3.10 A"/>
    <property type="chains" value="I5/M8=1-66"/>
</dbReference>
<dbReference type="PDB" id="4WQF">
    <property type="method" value="X-ray"/>
    <property type="resolution" value="2.80 A"/>
    <property type="chains" value="A4/C4=1-71"/>
</dbReference>
<dbReference type="PDB" id="4WQR">
    <property type="method" value="X-ray"/>
    <property type="resolution" value="3.15 A"/>
    <property type="chains" value="I5/M8=1-71"/>
</dbReference>
<dbReference type="PDB" id="4WQU">
    <property type="method" value="X-ray"/>
    <property type="resolution" value="2.80 A"/>
    <property type="chains" value="A4/C4=1-71"/>
</dbReference>
<dbReference type="PDB" id="4WQY">
    <property type="method" value="X-ray"/>
    <property type="resolution" value="2.80 A"/>
    <property type="chains" value="A4/C4=1-71"/>
</dbReference>
<dbReference type="PDB" id="4WR6">
    <property type="method" value="X-ray"/>
    <property type="resolution" value="3.05 A"/>
    <property type="chains" value="I5/M8=1-71"/>
</dbReference>
<dbReference type="PDB" id="4WRA">
    <property type="method" value="X-ray"/>
    <property type="resolution" value="3.05 A"/>
    <property type="chains" value="I5/M8=1-71"/>
</dbReference>
<dbReference type="PDB" id="4WRO">
    <property type="method" value="X-ray"/>
    <property type="resolution" value="3.05 A"/>
    <property type="chains" value="M8=1-71"/>
</dbReference>
<dbReference type="PDB" id="4WSD">
    <property type="method" value="X-ray"/>
    <property type="resolution" value="2.95 A"/>
    <property type="chains" value="I5/M8=1-71"/>
</dbReference>
<dbReference type="PDB" id="4WSM">
    <property type="method" value="X-ray"/>
    <property type="resolution" value="3.30 A"/>
    <property type="chains" value="I5/M8=1-71"/>
</dbReference>
<dbReference type="PDB" id="4WT1">
    <property type="method" value="X-ray"/>
    <property type="resolution" value="3.05 A"/>
    <property type="chains" value="I5/M8=1-71"/>
</dbReference>
<dbReference type="PDB" id="4WT8">
    <property type="method" value="X-ray"/>
    <property type="resolution" value="3.40 A"/>
    <property type="chains" value="C5/D5=10-39"/>
</dbReference>
<dbReference type="PDB" id="4WU1">
    <property type="method" value="X-ray"/>
    <property type="resolution" value="3.20 A"/>
    <property type="chains" value="I5/M8=1-71"/>
</dbReference>
<dbReference type="PDB" id="4WZD">
    <property type="method" value="X-ray"/>
    <property type="resolution" value="3.10 A"/>
    <property type="chains" value="I5/M8=1-71"/>
</dbReference>
<dbReference type="PDB" id="4WZO">
    <property type="method" value="X-ray"/>
    <property type="resolution" value="3.30 A"/>
    <property type="chains" value="I5/M8=1-71"/>
</dbReference>
<dbReference type="PDB" id="4Y4O">
    <property type="method" value="X-ray"/>
    <property type="resolution" value="2.30 A"/>
    <property type="chains" value="14/24=1-71"/>
</dbReference>
<dbReference type="PDB" id="4Y4P">
    <property type="method" value="X-ray"/>
    <property type="resolution" value="2.50 A"/>
    <property type="chains" value="14/24=1-71"/>
</dbReference>
<dbReference type="PDB" id="4YPB">
    <property type="method" value="X-ray"/>
    <property type="resolution" value="3.40 A"/>
    <property type="chains" value="R4/Y4=1-71"/>
</dbReference>
<dbReference type="PDB" id="4YZV">
    <property type="method" value="X-ray"/>
    <property type="resolution" value="3.10 A"/>
    <property type="chains" value="R4/Y4=1-71"/>
</dbReference>
<dbReference type="PDB" id="4Z3S">
    <property type="method" value="X-ray"/>
    <property type="resolution" value="2.65 A"/>
    <property type="chains" value="14/24=1-71"/>
</dbReference>
<dbReference type="PDB" id="4Z8C">
    <property type="method" value="X-ray"/>
    <property type="resolution" value="2.90 A"/>
    <property type="chains" value="14/24=1-71"/>
</dbReference>
<dbReference type="PDB" id="4ZER">
    <property type="method" value="X-ray"/>
    <property type="resolution" value="3.10 A"/>
    <property type="chains" value="14/24=1-69"/>
</dbReference>
<dbReference type="PDB" id="4ZSN">
    <property type="method" value="X-ray"/>
    <property type="resolution" value="3.60 A"/>
    <property type="chains" value="R4/Y4=1-71"/>
</dbReference>
<dbReference type="PDB" id="5A9Z">
    <property type="method" value="EM"/>
    <property type="resolution" value="4.70 A"/>
    <property type="chains" value="Aa=1-71"/>
</dbReference>
<dbReference type="PDB" id="5AA0">
    <property type="method" value="EM"/>
    <property type="resolution" value="5.00 A"/>
    <property type="chains" value="Aa=1-71"/>
</dbReference>
<dbReference type="PDB" id="5CZP">
    <property type="method" value="X-ray"/>
    <property type="resolution" value="3.30 A"/>
    <property type="chains" value="R4/Y4=1-71"/>
</dbReference>
<dbReference type="PDB" id="5D8B">
    <property type="method" value="X-ray"/>
    <property type="resolution" value="3.63 A"/>
    <property type="chains" value="SC/TC=1-71"/>
</dbReference>
<dbReference type="PDB" id="5DFE">
    <property type="method" value="X-ray"/>
    <property type="resolution" value="3.10 A"/>
    <property type="chains" value="R4/Y4=1-71"/>
</dbReference>
<dbReference type="PDB" id="5DOX">
    <property type="method" value="X-ray"/>
    <property type="resolution" value="3.10 A"/>
    <property type="chains" value="14/24=1-71"/>
</dbReference>
<dbReference type="PDB" id="5DOY">
    <property type="method" value="X-ray"/>
    <property type="resolution" value="2.60 A"/>
    <property type="chains" value="14/24=1-71"/>
</dbReference>
<dbReference type="PDB" id="5E7K">
    <property type="method" value="X-ray"/>
    <property type="resolution" value="3.20 A"/>
    <property type="chains" value="M8=1-71"/>
</dbReference>
<dbReference type="PDB" id="5E81">
    <property type="method" value="X-ray"/>
    <property type="resolution" value="2.95 A"/>
    <property type="chains" value="M8=1-71"/>
</dbReference>
<dbReference type="PDB" id="5EL4">
    <property type="method" value="X-ray"/>
    <property type="resolution" value="3.15 A"/>
    <property type="chains" value="M8=1-71"/>
</dbReference>
<dbReference type="PDB" id="5EL5">
    <property type="method" value="X-ray"/>
    <property type="resolution" value="3.15 A"/>
    <property type="chains" value="M8=1-71"/>
</dbReference>
<dbReference type="PDB" id="5EL6">
    <property type="method" value="X-ray"/>
    <property type="resolution" value="3.10 A"/>
    <property type="chains" value="M8=1-71"/>
</dbReference>
<dbReference type="PDB" id="5EL7">
    <property type="method" value="X-ray"/>
    <property type="resolution" value="3.15 A"/>
    <property type="chains" value="M8=1-71"/>
</dbReference>
<dbReference type="PDB" id="5F8K">
    <property type="method" value="X-ray"/>
    <property type="resolution" value="2.80 A"/>
    <property type="chains" value="14/24=1-69"/>
</dbReference>
<dbReference type="PDB" id="5FDU">
    <property type="method" value="X-ray"/>
    <property type="resolution" value="2.90 A"/>
    <property type="chains" value="14/24=1-69"/>
</dbReference>
<dbReference type="PDB" id="5FDV">
    <property type="method" value="X-ray"/>
    <property type="resolution" value="2.80 A"/>
    <property type="chains" value="14/24=1-69"/>
</dbReference>
<dbReference type="PDB" id="5HAU">
    <property type="method" value="X-ray"/>
    <property type="resolution" value="3.00 A"/>
    <property type="chains" value="12/22=1-71"/>
</dbReference>
<dbReference type="PDB" id="5HCP">
    <property type="method" value="X-ray"/>
    <property type="resolution" value="2.89 A"/>
    <property type="chains" value="14/24=1-71"/>
</dbReference>
<dbReference type="PDB" id="5HCQ">
    <property type="method" value="X-ray"/>
    <property type="resolution" value="2.80 A"/>
    <property type="chains" value="14/24=1-71"/>
</dbReference>
<dbReference type="PDB" id="5HCR">
    <property type="method" value="X-ray"/>
    <property type="resolution" value="2.80 A"/>
    <property type="chains" value="14/24=1-71"/>
</dbReference>
<dbReference type="PDB" id="5HD1">
    <property type="method" value="X-ray"/>
    <property type="resolution" value="2.70 A"/>
    <property type="chains" value="14/24=1-71"/>
</dbReference>
<dbReference type="PDB" id="5IB7">
    <property type="method" value="X-ray"/>
    <property type="resolution" value="2.99 A"/>
    <property type="chains" value="M8=1-71"/>
</dbReference>
<dbReference type="PDB" id="5IB8">
    <property type="method" value="X-ray"/>
    <property type="resolution" value="3.13 A"/>
    <property type="chains" value="M8=1-71"/>
</dbReference>
<dbReference type="PDB" id="5IBB">
    <property type="method" value="X-ray"/>
    <property type="resolution" value="2.96 A"/>
    <property type="chains" value="I5/M8=1-71"/>
</dbReference>
<dbReference type="PDB" id="5IMQ">
    <property type="method" value="EM"/>
    <property type="resolution" value="3.80 A"/>
    <property type="chains" value="v=1-71"/>
</dbReference>
<dbReference type="PDB" id="5IMR">
    <property type="method" value="EM"/>
    <property type="chains" value="v=1-71"/>
</dbReference>
<dbReference type="PDB" id="5J30">
    <property type="method" value="X-ray"/>
    <property type="resolution" value="3.20 A"/>
    <property type="chains" value="R4/Y4=1-71"/>
</dbReference>
<dbReference type="PDB" id="5J3C">
    <property type="method" value="X-ray"/>
    <property type="resolution" value="3.04 A"/>
    <property type="chains" value="R4/Y4=1-71"/>
</dbReference>
<dbReference type="PDB" id="5J4B">
    <property type="method" value="X-ray"/>
    <property type="resolution" value="2.60 A"/>
    <property type="chains" value="14/24=1-71"/>
</dbReference>
<dbReference type="PDB" id="5J4C">
    <property type="method" value="X-ray"/>
    <property type="resolution" value="2.80 A"/>
    <property type="chains" value="14/24=1-71"/>
</dbReference>
<dbReference type="PDB" id="5J8B">
    <property type="method" value="X-ray"/>
    <property type="resolution" value="2.60 A"/>
    <property type="chains" value="4=1-71"/>
</dbReference>
<dbReference type="PDB" id="5NDJ">
    <property type="method" value="X-ray"/>
    <property type="resolution" value="3.15 A"/>
    <property type="chains" value="I5/M8=1-71"/>
</dbReference>
<dbReference type="PDB" id="5NDK">
    <property type="method" value="X-ray"/>
    <property type="resolution" value="2.95 A"/>
    <property type="chains" value="I5/M8=1-71"/>
</dbReference>
<dbReference type="PDB" id="5OT7">
    <property type="method" value="EM"/>
    <property type="resolution" value="3.80 A"/>
    <property type="chains" value="Z=1-71"/>
</dbReference>
<dbReference type="PDB" id="5UQ7">
    <property type="method" value="EM"/>
    <property type="resolution" value="3.50 A"/>
    <property type="chains" value="4=1-69"/>
</dbReference>
<dbReference type="PDB" id="5UQ8">
    <property type="method" value="EM"/>
    <property type="resolution" value="3.20 A"/>
    <property type="chains" value="4=1-69"/>
</dbReference>
<dbReference type="PDB" id="5VP2">
    <property type="method" value="X-ray"/>
    <property type="resolution" value="2.80 A"/>
    <property type="chains" value="14/24=1-71"/>
</dbReference>
<dbReference type="PDB" id="5VPO">
    <property type="method" value="X-ray"/>
    <property type="resolution" value="3.34 A"/>
    <property type="chains" value="R4/Y4=1-71"/>
</dbReference>
<dbReference type="PDB" id="5VPP">
    <property type="method" value="X-ray"/>
    <property type="resolution" value="3.90 A"/>
    <property type="chains" value="R4/Y4=1-71"/>
</dbReference>
<dbReference type="PDB" id="5W4K">
    <property type="method" value="X-ray"/>
    <property type="resolution" value="2.70 A"/>
    <property type="chains" value="14/24=1-71"/>
</dbReference>
<dbReference type="PDB" id="5WIS">
    <property type="method" value="X-ray"/>
    <property type="resolution" value="2.70 A"/>
    <property type="chains" value="14/24=1-71"/>
</dbReference>
<dbReference type="PDB" id="5WIT">
    <property type="method" value="X-ray"/>
    <property type="resolution" value="2.60 A"/>
    <property type="chains" value="14/24=1-71"/>
</dbReference>
<dbReference type="PDB" id="5ZLU">
    <property type="method" value="EM"/>
    <property type="resolution" value="3.60 A"/>
    <property type="chains" value="CC/w=1-71"/>
</dbReference>
<dbReference type="PDB" id="6BUW">
    <property type="method" value="X-ray"/>
    <property type="resolution" value="3.50 A"/>
    <property type="chains" value="R4/Y4=1-71"/>
</dbReference>
<dbReference type="PDB" id="6BZ6">
    <property type="method" value="X-ray"/>
    <property type="resolution" value="3.18 A"/>
    <property type="chains" value="R4/Y4=1-71"/>
</dbReference>
<dbReference type="PDB" id="6BZ7">
    <property type="method" value="X-ray"/>
    <property type="resolution" value="3.68 A"/>
    <property type="chains" value="R4/Y4=1-71"/>
</dbReference>
<dbReference type="PDB" id="6BZ8">
    <property type="method" value="X-ray"/>
    <property type="resolution" value="3.74 A"/>
    <property type="chains" value="R4/Y4=1-71"/>
</dbReference>
<dbReference type="PDB" id="6C5L">
    <property type="method" value="X-ray"/>
    <property type="resolution" value="3.20 A"/>
    <property type="chains" value="B4/D4=1-71"/>
</dbReference>
<dbReference type="PDB" id="6CAE">
    <property type="method" value="X-ray"/>
    <property type="resolution" value="2.60 A"/>
    <property type="chains" value="14/24=1-71"/>
</dbReference>
<dbReference type="PDB" id="6CFJ">
    <property type="method" value="X-ray"/>
    <property type="resolution" value="2.80 A"/>
    <property type="chains" value="14/24=1-71"/>
</dbReference>
<dbReference type="PDB" id="6CFK">
    <property type="method" value="X-ray"/>
    <property type="resolution" value="2.70 A"/>
    <property type="chains" value="14/24=1-71"/>
</dbReference>
<dbReference type="PDB" id="6CFL">
    <property type="method" value="X-ray"/>
    <property type="resolution" value="2.60 A"/>
    <property type="chains" value="14/24=1-71"/>
</dbReference>
<dbReference type="PDB" id="6CZR">
    <property type="method" value="X-ray"/>
    <property type="resolution" value="3.14 A"/>
    <property type="chains" value="14/24=1-69"/>
</dbReference>
<dbReference type="PDB" id="6FKR">
    <property type="method" value="X-ray"/>
    <property type="resolution" value="3.20 A"/>
    <property type="chains" value="14/24=1-69"/>
</dbReference>
<dbReference type="PDB" id="6GSJ">
    <property type="method" value="X-ray"/>
    <property type="resolution" value="2.96 A"/>
    <property type="chains" value="M8=1-71"/>
</dbReference>
<dbReference type="PDB" id="6GSK">
    <property type="method" value="X-ray"/>
    <property type="resolution" value="3.36 A"/>
    <property type="chains" value="M8=1-71"/>
</dbReference>
<dbReference type="PDB" id="6GSL">
    <property type="method" value="X-ray"/>
    <property type="resolution" value="3.16 A"/>
    <property type="chains" value="M8=1-71"/>
</dbReference>
<dbReference type="PDB" id="6GZQ">
    <property type="method" value="EM"/>
    <property type="resolution" value="3.28 A"/>
    <property type="chains" value="Z1=1-63"/>
</dbReference>
<dbReference type="PDB" id="6GZX">
    <property type="method" value="EM"/>
    <property type="resolution" value="4.57 A"/>
    <property type="chains" value="Z1/Z2=1-63"/>
</dbReference>
<dbReference type="PDB" id="6GZZ">
    <property type="method" value="EM"/>
    <property type="resolution" value="4.13 A"/>
    <property type="chains" value="Z1/Z2=1-63"/>
</dbReference>
<dbReference type="PDB" id="6N9E">
    <property type="method" value="X-ray"/>
    <property type="resolution" value="3.70 A"/>
    <property type="chains" value="14/24=1-71"/>
</dbReference>
<dbReference type="PDB" id="6N9F">
    <property type="method" value="X-ray"/>
    <property type="resolution" value="3.70 A"/>
    <property type="chains" value="14/24=1-71"/>
</dbReference>
<dbReference type="PDB" id="6ND5">
    <property type="method" value="X-ray"/>
    <property type="resolution" value="2.60 A"/>
    <property type="chains" value="14/24=1-71"/>
</dbReference>
<dbReference type="PDB" id="6ND6">
    <property type="method" value="X-ray"/>
    <property type="resolution" value="2.85 A"/>
    <property type="chains" value="14/24=1-71"/>
</dbReference>
<dbReference type="PDB" id="6NDK">
    <property type="method" value="X-ray"/>
    <property type="resolution" value="3.64 A"/>
    <property type="chains" value="R4/Y4=1-71"/>
</dbReference>
<dbReference type="PDB" id="6NSH">
    <property type="method" value="X-ray"/>
    <property type="resolution" value="3.40 A"/>
    <property type="chains" value="R4/Y4=1-71"/>
</dbReference>
<dbReference type="PDB" id="6NTA">
    <property type="method" value="X-ray"/>
    <property type="resolution" value="3.10 A"/>
    <property type="chains" value="R4/Y4=1-71"/>
</dbReference>
<dbReference type="PDB" id="6NUO">
    <property type="method" value="X-ray"/>
    <property type="resolution" value="3.20 A"/>
    <property type="chains" value="R4/Y4=1-71"/>
</dbReference>
<dbReference type="PDB" id="6NWY">
    <property type="method" value="X-ray"/>
    <property type="resolution" value="3.50 A"/>
    <property type="chains" value="R4/Y4=1-71"/>
</dbReference>
<dbReference type="PDB" id="6O3M">
    <property type="method" value="X-ray"/>
    <property type="resolution" value="3.97 A"/>
    <property type="chains" value="R4/Y4=1-71"/>
</dbReference>
<dbReference type="PDB" id="6O97">
    <property type="method" value="X-ray"/>
    <property type="resolution" value="2.75 A"/>
    <property type="chains" value="14/24=1-71"/>
</dbReference>
<dbReference type="PDB" id="6OF1">
    <property type="method" value="X-ray"/>
    <property type="resolution" value="2.80 A"/>
    <property type="chains" value="14/24=1-71"/>
</dbReference>
<dbReference type="PDB" id="6OF6">
    <property type="method" value="X-ray"/>
    <property type="resolution" value="3.20 A"/>
    <property type="chains" value="R4/Y4=1-71"/>
</dbReference>
<dbReference type="PDB" id="6OJ2">
    <property type="method" value="X-ray"/>
    <property type="resolution" value="3.20 A"/>
    <property type="chains" value="R4/Y4=1-71"/>
</dbReference>
<dbReference type="PDB" id="6OPE">
    <property type="method" value="X-ray"/>
    <property type="resolution" value="3.10 A"/>
    <property type="chains" value="R4/Y4=1-71"/>
</dbReference>
<dbReference type="PDB" id="6ORD">
    <property type="method" value="X-ray"/>
    <property type="resolution" value="3.10 A"/>
    <property type="chains" value="R4/Y4=1-71"/>
</dbReference>
<dbReference type="PDB" id="6OSI">
    <property type="method" value="X-ray"/>
    <property type="resolution" value="4.14 A"/>
    <property type="chains" value="R4/Y4=1-71"/>
</dbReference>
<dbReference type="PDB" id="6OTR">
    <property type="method" value="X-ray"/>
    <property type="resolution" value="3.12 A"/>
    <property type="chains" value="R4/Y4=1-71"/>
</dbReference>
<dbReference type="PDB" id="6OXA">
    <property type="method" value="X-ray"/>
    <property type="resolution" value="3.25 A"/>
    <property type="chains" value="R4/Y4=1-71"/>
</dbReference>
<dbReference type="PDB" id="6OXI">
    <property type="method" value="X-ray"/>
    <property type="resolution" value="3.50 A"/>
    <property type="chains" value="R4/Y4=1-71"/>
</dbReference>
<dbReference type="PDB" id="6Q95">
    <property type="method" value="EM"/>
    <property type="resolution" value="3.70 A"/>
    <property type="chains" value="a=2-59"/>
</dbReference>
<dbReference type="PDB" id="6QNQ">
    <property type="method" value="X-ray"/>
    <property type="resolution" value="3.50 A"/>
    <property type="chains" value="I5/M8=1-71"/>
</dbReference>
<dbReference type="PDB" id="6QNR">
    <property type="method" value="X-ray"/>
    <property type="resolution" value="3.10 A"/>
    <property type="chains" value="I5/M8=1-71"/>
</dbReference>
<dbReference type="PDB" id="6UCQ">
    <property type="method" value="X-ray"/>
    <property type="resolution" value="3.50 A"/>
    <property type="chains" value="14/24=1-71"/>
</dbReference>
<dbReference type="PDB" id="6UO1">
    <property type="method" value="X-ray"/>
    <property type="resolution" value="2.95 A"/>
    <property type="chains" value="14/24=1-71"/>
</dbReference>
<dbReference type="PDB" id="6XHV">
    <property type="method" value="X-ray"/>
    <property type="resolution" value="2.40 A"/>
    <property type="chains" value="14/24=1-71"/>
</dbReference>
<dbReference type="PDB" id="6XHW">
    <property type="method" value="X-ray"/>
    <property type="resolution" value="2.50 A"/>
    <property type="chains" value="14/24=1-71"/>
</dbReference>
<dbReference type="PDB" id="6XHX">
    <property type="method" value="X-ray"/>
    <property type="resolution" value="2.55 A"/>
    <property type="chains" value="14/24=1-71"/>
</dbReference>
<dbReference type="PDB" id="6XHY">
    <property type="method" value="X-ray"/>
    <property type="resolution" value="2.60 A"/>
    <property type="chains" value="14/24=1-71"/>
</dbReference>
<dbReference type="PDB" id="6XQD">
    <property type="method" value="X-ray"/>
    <property type="resolution" value="2.80 A"/>
    <property type="chains" value="14/24=1-71"/>
</dbReference>
<dbReference type="PDB" id="6XQE">
    <property type="method" value="X-ray"/>
    <property type="resolution" value="3.00 A"/>
    <property type="chains" value="14/24=1-71"/>
</dbReference>
<dbReference type="PDB" id="7AZO">
    <property type="method" value="X-ray"/>
    <property type="resolution" value="3.30 A"/>
    <property type="chains" value="L31A/L31B=1-71"/>
</dbReference>
<dbReference type="PDB" id="7AZS">
    <property type="method" value="X-ray"/>
    <property type="resolution" value="3.10 A"/>
    <property type="chains" value="L31A/L31B=1-71"/>
</dbReference>
<dbReference type="PDB" id="7JQL">
    <property type="method" value="X-ray"/>
    <property type="resolution" value="3.00 A"/>
    <property type="chains" value="14/24=1-71"/>
</dbReference>
<dbReference type="PDB" id="7JQM">
    <property type="method" value="X-ray"/>
    <property type="resolution" value="3.05 A"/>
    <property type="chains" value="14/24=1-71"/>
</dbReference>
<dbReference type="PDB" id="7LH5">
    <property type="method" value="X-ray"/>
    <property type="resolution" value="3.27 A"/>
    <property type="chains" value="B4/D4=1-71"/>
</dbReference>
<dbReference type="PDB" id="7MD7">
    <property type="method" value="X-ray"/>
    <property type="resolution" value="2.80 A"/>
    <property type="chains" value="14/24=1-71"/>
</dbReference>
<dbReference type="PDB" id="7RQ8">
    <property type="method" value="X-ray"/>
    <property type="resolution" value="2.50 A"/>
    <property type="chains" value="14/24=1-71"/>
</dbReference>
<dbReference type="PDB" id="7RQ9">
    <property type="method" value="X-ray"/>
    <property type="resolution" value="2.60 A"/>
    <property type="chains" value="14/24=1-71"/>
</dbReference>
<dbReference type="PDB" id="7RQA">
    <property type="method" value="X-ray"/>
    <property type="resolution" value="2.40 A"/>
    <property type="chains" value="14/24=1-71"/>
</dbReference>
<dbReference type="PDB" id="7RQB">
    <property type="method" value="X-ray"/>
    <property type="resolution" value="2.45 A"/>
    <property type="chains" value="14/24=1-71"/>
</dbReference>
<dbReference type="PDB" id="7RQC">
    <property type="method" value="X-ray"/>
    <property type="resolution" value="2.50 A"/>
    <property type="chains" value="14/24=1-71"/>
</dbReference>
<dbReference type="PDB" id="7RQD">
    <property type="method" value="X-ray"/>
    <property type="resolution" value="2.50 A"/>
    <property type="chains" value="14/24=1-71"/>
</dbReference>
<dbReference type="PDB" id="7RQE">
    <property type="method" value="X-ray"/>
    <property type="resolution" value="2.40 A"/>
    <property type="chains" value="14/24=1-71"/>
</dbReference>
<dbReference type="PDB" id="7U2H">
    <property type="method" value="X-ray"/>
    <property type="resolution" value="2.55 A"/>
    <property type="chains" value="14/24=1-71"/>
</dbReference>
<dbReference type="PDB" id="7U2I">
    <property type="method" value="X-ray"/>
    <property type="resolution" value="2.55 A"/>
    <property type="chains" value="14/24=1-71"/>
</dbReference>
<dbReference type="PDB" id="7U2J">
    <property type="method" value="X-ray"/>
    <property type="resolution" value="2.55 A"/>
    <property type="chains" value="14/24=1-71"/>
</dbReference>
<dbReference type="PDB" id="8CVJ">
    <property type="method" value="X-ray"/>
    <property type="resolution" value="2.40 A"/>
    <property type="chains" value="14/24=1-71"/>
</dbReference>
<dbReference type="PDB" id="8CVK">
    <property type="method" value="X-ray"/>
    <property type="resolution" value="2.50 A"/>
    <property type="chains" value="14/24=1-71"/>
</dbReference>
<dbReference type="PDB" id="8CVL">
    <property type="method" value="X-ray"/>
    <property type="resolution" value="2.30 A"/>
    <property type="chains" value="14/24=1-71"/>
</dbReference>
<dbReference type="PDB" id="8EKB">
    <property type="method" value="X-ray"/>
    <property type="resolution" value="2.70 A"/>
    <property type="chains" value="14/24=1-71"/>
</dbReference>
<dbReference type="PDB" id="8EV6">
    <property type="method" value="X-ray"/>
    <property type="resolution" value="2.95 A"/>
    <property type="chains" value="14/24=1-71"/>
</dbReference>
<dbReference type="PDB" id="8EV7">
    <property type="method" value="X-ray"/>
    <property type="resolution" value="2.89 A"/>
    <property type="chains" value="14/24=1-71"/>
</dbReference>
<dbReference type="PDB" id="8FC1">
    <property type="method" value="X-ray"/>
    <property type="resolution" value="2.50 A"/>
    <property type="chains" value="14/24=1-71"/>
</dbReference>
<dbReference type="PDB" id="8FC2">
    <property type="method" value="X-ray"/>
    <property type="resolution" value="2.50 A"/>
    <property type="chains" value="14/24=1-71"/>
</dbReference>
<dbReference type="PDB" id="8FC3">
    <property type="method" value="X-ray"/>
    <property type="resolution" value="2.60 A"/>
    <property type="chains" value="14/24=1-71"/>
</dbReference>
<dbReference type="PDB" id="8FC4">
    <property type="method" value="X-ray"/>
    <property type="resolution" value="2.45 A"/>
    <property type="chains" value="14/24=1-71"/>
</dbReference>
<dbReference type="PDB" id="8FC5">
    <property type="method" value="X-ray"/>
    <property type="resolution" value="2.65 A"/>
    <property type="chains" value="14/24=1-71"/>
</dbReference>
<dbReference type="PDB" id="8FC6">
    <property type="method" value="X-ray"/>
    <property type="resolution" value="2.35 A"/>
    <property type="chains" value="14/24=1-71"/>
</dbReference>
<dbReference type="PDB" id="8FOM">
    <property type="method" value="X-ray"/>
    <property type="resolution" value="3.58 A"/>
    <property type="chains" value="R4/Y4=1-71"/>
</dbReference>
<dbReference type="PDB" id="8FON">
    <property type="method" value="X-ray"/>
    <property type="resolution" value="3.64 A"/>
    <property type="chains" value="R4/Y4=1-71"/>
</dbReference>
<dbReference type="PDB" id="8G29">
    <property type="method" value="X-ray"/>
    <property type="resolution" value="2.55 A"/>
    <property type="chains" value="14/24=1-71"/>
</dbReference>
<dbReference type="PDB" id="8G2A">
    <property type="method" value="X-ray"/>
    <property type="resolution" value="2.45 A"/>
    <property type="chains" value="14/24=1-71"/>
</dbReference>
<dbReference type="PDB" id="8G2B">
    <property type="method" value="X-ray"/>
    <property type="resolution" value="2.55 A"/>
    <property type="chains" value="14/24=1-71"/>
</dbReference>
<dbReference type="PDB" id="8G2C">
    <property type="method" value="X-ray"/>
    <property type="resolution" value="2.65 A"/>
    <property type="chains" value="14/24=1-71"/>
</dbReference>
<dbReference type="PDB" id="8G2D">
    <property type="method" value="X-ray"/>
    <property type="resolution" value="2.70 A"/>
    <property type="chains" value="14/24=1-71"/>
</dbReference>
<dbReference type="PDB" id="8T8B">
    <property type="method" value="X-ray"/>
    <property type="resolution" value="2.65 A"/>
    <property type="chains" value="14/24=1-71"/>
</dbReference>
<dbReference type="PDB" id="8T8C">
    <property type="method" value="X-ray"/>
    <property type="resolution" value="2.60 A"/>
    <property type="chains" value="14/24=1-71"/>
</dbReference>
<dbReference type="PDB" id="8UD6">
    <property type="method" value="X-ray"/>
    <property type="resolution" value="2.70 A"/>
    <property type="chains" value="14/24=1-71"/>
</dbReference>
<dbReference type="PDB" id="8UD7">
    <property type="method" value="X-ray"/>
    <property type="resolution" value="2.55 A"/>
    <property type="chains" value="14/24=1-71"/>
</dbReference>
<dbReference type="PDB" id="8UD8">
    <property type="method" value="X-ray"/>
    <property type="resolution" value="2.60 A"/>
    <property type="chains" value="14/24=1-71"/>
</dbReference>
<dbReference type="PDB" id="8UVR">
    <property type="method" value="X-ray"/>
    <property type="resolution" value="2.60 A"/>
    <property type="chains" value="14/24=1-71"/>
</dbReference>
<dbReference type="PDB" id="8UVS">
    <property type="method" value="X-ray"/>
    <property type="resolution" value="2.75 A"/>
    <property type="chains" value="14/24=1-71"/>
</dbReference>
<dbReference type="PDB" id="8VTU">
    <property type="method" value="X-ray"/>
    <property type="resolution" value="2.40 A"/>
    <property type="chains" value="14/24=1-71"/>
</dbReference>
<dbReference type="PDB" id="8VTV">
    <property type="method" value="X-ray"/>
    <property type="resolution" value="2.55 A"/>
    <property type="chains" value="14/24=1-71"/>
</dbReference>
<dbReference type="PDB" id="8VTW">
    <property type="method" value="X-ray"/>
    <property type="resolution" value="2.35 A"/>
    <property type="chains" value="14/24=1-71"/>
</dbReference>
<dbReference type="PDB" id="8VTX">
    <property type="method" value="X-ray"/>
    <property type="resolution" value="2.40 A"/>
    <property type="chains" value="14/24=1-71"/>
</dbReference>
<dbReference type="PDB" id="8VTY">
    <property type="method" value="X-ray"/>
    <property type="resolution" value="2.60 A"/>
    <property type="chains" value="14/24=1-71"/>
</dbReference>
<dbReference type="PDB" id="8WV1">
    <property type="method" value="X-ray"/>
    <property type="resolution" value="3.99 A"/>
    <property type="chains" value="Z/z=1-71"/>
</dbReference>
<dbReference type="PDB" id="9B00">
    <property type="method" value="X-ray"/>
    <property type="resolution" value="2.80 A"/>
    <property type="chains" value="14/24=1-71"/>
</dbReference>
<dbReference type="PDB" id="9D0J">
    <property type="method" value="X-ray"/>
    <property type="resolution" value="2.50 A"/>
    <property type="chains" value="14/24=1-71"/>
</dbReference>
<dbReference type="PDB" id="9D7R">
    <property type="method" value="X-ray"/>
    <property type="resolution" value="2.70 A"/>
    <property type="chains" value="14/24=1-71"/>
</dbReference>
<dbReference type="PDB" id="9D7S">
    <property type="method" value="X-ray"/>
    <property type="resolution" value="2.85 A"/>
    <property type="chains" value="14/24=1-71"/>
</dbReference>
<dbReference type="PDB" id="9D7T">
    <property type="method" value="X-ray"/>
    <property type="resolution" value="2.70 A"/>
    <property type="chains" value="14/24=1-71"/>
</dbReference>
<dbReference type="PDB" id="9DFC">
    <property type="method" value="X-ray"/>
    <property type="resolution" value="2.50 A"/>
    <property type="chains" value="14/24=1-71"/>
</dbReference>
<dbReference type="PDB" id="9DFD">
    <property type="method" value="X-ray"/>
    <property type="resolution" value="2.60 A"/>
    <property type="chains" value="14/24=1-71"/>
</dbReference>
<dbReference type="PDB" id="9DFE">
    <property type="method" value="X-ray"/>
    <property type="resolution" value="2.60 A"/>
    <property type="chains" value="14/24=1-71"/>
</dbReference>
<dbReference type="PDBsum" id="1VVJ"/>
<dbReference type="PDBsum" id="1VY4"/>
<dbReference type="PDBsum" id="1VY5"/>
<dbReference type="PDBsum" id="1VY6"/>
<dbReference type="PDBsum" id="1VY7"/>
<dbReference type="PDBsum" id="4L47"/>
<dbReference type="PDBsum" id="4L71"/>
<dbReference type="PDBsum" id="4LEL"/>
<dbReference type="PDBsum" id="4LFZ"/>
<dbReference type="PDBsum" id="4LNT"/>
<dbReference type="PDBsum" id="4LSK"/>
<dbReference type="PDBsum" id="4LT8"/>
<dbReference type="PDBsum" id="4P6F"/>
<dbReference type="PDBsum" id="4P70"/>
<dbReference type="PDBsum" id="4TUA"/>
<dbReference type="PDBsum" id="4TUB"/>
<dbReference type="PDBsum" id="4TUC"/>
<dbReference type="PDBsum" id="4TUD"/>
<dbReference type="PDBsum" id="4TUE"/>
<dbReference type="PDBsum" id="4V4P"/>
<dbReference type="PDBsum" id="4V4X"/>
<dbReference type="PDBsum" id="4V4Y"/>
<dbReference type="PDBsum" id="4V4Z"/>
<dbReference type="PDBsum" id="4V51"/>
<dbReference type="PDBsum" id="4V5A"/>
<dbReference type="PDBsum" id="4V5C"/>
<dbReference type="PDBsum" id="4V5D"/>
<dbReference type="PDBsum" id="4V5E"/>
<dbReference type="PDBsum" id="4V5F"/>
<dbReference type="PDBsum" id="4V5G"/>
<dbReference type="PDBsum" id="4V5J"/>
<dbReference type="PDBsum" id="4V5K"/>
<dbReference type="PDBsum" id="4V5L"/>
<dbReference type="PDBsum" id="4V5M"/>
<dbReference type="PDBsum" id="4V5N"/>
<dbReference type="PDBsum" id="4V5P"/>
<dbReference type="PDBsum" id="4V5Q"/>
<dbReference type="PDBsum" id="4V5R"/>
<dbReference type="PDBsum" id="4V5S"/>
<dbReference type="PDBsum" id="4V68"/>
<dbReference type="PDBsum" id="4V6A"/>
<dbReference type="PDBsum" id="4V6F"/>
<dbReference type="PDBsum" id="4V6G"/>
<dbReference type="PDBsum" id="4V7J"/>
<dbReference type="PDBsum" id="4V7K"/>
<dbReference type="PDBsum" id="4V7L"/>
<dbReference type="PDBsum" id="4V7M"/>
<dbReference type="PDBsum" id="4V7W"/>
<dbReference type="PDBsum" id="4V7X"/>
<dbReference type="PDBsum" id="4V7Y"/>
<dbReference type="PDBsum" id="4V7Z"/>
<dbReference type="PDBsum" id="4V87"/>
<dbReference type="PDBsum" id="4V8A"/>
<dbReference type="PDBsum" id="4V8B"/>
<dbReference type="PDBsum" id="4V8C"/>
<dbReference type="PDBsum" id="4V8D"/>
<dbReference type="PDBsum" id="4V8E"/>
<dbReference type="PDBsum" id="4V8F"/>
<dbReference type="PDBsum" id="4V8G"/>
<dbReference type="PDBsum" id="4V8H"/>
<dbReference type="PDBsum" id="4V8I"/>
<dbReference type="PDBsum" id="4V8J"/>
<dbReference type="PDBsum" id="4V8N"/>
<dbReference type="PDBsum" id="4V8O"/>
<dbReference type="PDBsum" id="4V8Q"/>
<dbReference type="PDBsum" id="4V8U"/>
<dbReference type="PDBsum" id="4V8X"/>
<dbReference type="PDBsum" id="4V90"/>
<dbReference type="PDBsum" id="4V95"/>
<dbReference type="PDBsum" id="4V97"/>
<dbReference type="PDBsum" id="4V9A"/>
<dbReference type="PDBsum" id="4V9B"/>
<dbReference type="PDBsum" id="4V9H"/>
<dbReference type="PDBsum" id="4V9I"/>
<dbReference type="PDBsum" id="4V9R"/>
<dbReference type="PDBsum" id="4V9S"/>
<dbReference type="PDBsum" id="4W2E"/>
<dbReference type="PDBsum" id="4W2F"/>
<dbReference type="PDBsum" id="4W2G"/>
<dbReference type="PDBsum" id="4W2H"/>
<dbReference type="PDBsum" id="4W2I"/>
<dbReference type="PDBsum" id="4W4G"/>
<dbReference type="PDBsum" id="4WPO"/>
<dbReference type="PDBsum" id="4WQ1"/>
<dbReference type="PDBsum" id="4WQF"/>
<dbReference type="PDBsum" id="4WQR"/>
<dbReference type="PDBsum" id="4WQU"/>
<dbReference type="PDBsum" id="4WQY"/>
<dbReference type="PDBsum" id="4WR6"/>
<dbReference type="PDBsum" id="4WRA"/>
<dbReference type="PDBsum" id="4WRO"/>
<dbReference type="PDBsum" id="4WSD"/>
<dbReference type="PDBsum" id="4WSM"/>
<dbReference type="PDBsum" id="4WT1"/>
<dbReference type="PDBsum" id="4WT8"/>
<dbReference type="PDBsum" id="4WU1"/>
<dbReference type="PDBsum" id="4WZD"/>
<dbReference type="PDBsum" id="4WZO"/>
<dbReference type="PDBsum" id="4Y4O"/>
<dbReference type="PDBsum" id="4Y4P"/>
<dbReference type="PDBsum" id="4YPB"/>
<dbReference type="PDBsum" id="4YZV"/>
<dbReference type="PDBsum" id="4Z3S"/>
<dbReference type="PDBsum" id="4Z8C"/>
<dbReference type="PDBsum" id="4ZER"/>
<dbReference type="PDBsum" id="4ZSN"/>
<dbReference type="PDBsum" id="5A9Z"/>
<dbReference type="PDBsum" id="5AA0"/>
<dbReference type="PDBsum" id="5CZP"/>
<dbReference type="PDBsum" id="5D8B"/>
<dbReference type="PDBsum" id="5DFE"/>
<dbReference type="PDBsum" id="5DOX"/>
<dbReference type="PDBsum" id="5DOY"/>
<dbReference type="PDBsum" id="5E7K"/>
<dbReference type="PDBsum" id="5E81"/>
<dbReference type="PDBsum" id="5EL4"/>
<dbReference type="PDBsum" id="5EL5"/>
<dbReference type="PDBsum" id="5EL6"/>
<dbReference type="PDBsum" id="5EL7"/>
<dbReference type="PDBsum" id="5F8K"/>
<dbReference type="PDBsum" id="5FDU"/>
<dbReference type="PDBsum" id="5FDV"/>
<dbReference type="PDBsum" id="5HAU"/>
<dbReference type="PDBsum" id="5HCP"/>
<dbReference type="PDBsum" id="5HCQ"/>
<dbReference type="PDBsum" id="5HCR"/>
<dbReference type="PDBsum" id="5HD1"/>
<dbReference type="PDBsum" id="5IB7"/>
<dbReference type="PDBsum" id="5IB8"/>
<dbReference type="PDBsum" id="5IBB"/>
<dbReference type="PDBsum" id="5IMQ"/>
<dbReference type="PDBsum" id="5IMR"/>
<dbReference type="PDBsum" id="5J30"/>
<dbReference type="PDBsum" id="5J3C"/>
<dbReference type="PDBsum" id="5J4B"/>
<dbReference type="PDBsum" id="5J4C"/>
<dbReference type="PDBsum" id="5J8B"/>
<dbReference type="PDBsum" id="5NDJ"/>
<dbReference type="PDBsum" id="5NDK"/>
<dbReference type="PDBsum" id="5OT7"/>
<dbReference type="PDBsum" id="5UQ7"/>
<dbReference type="PDBsum" id="5UQ8"/>
<dbReference type="PDBsum" id="5VP2"/>
<dbReference type="PDBsum" id="5VPO"/>
<dbReference type="PDBsum" id="5VPP"/>
<dbReference type="PDBsum" id="5W4K"/>
<dbReference type="PDBsum" id="5WIS"/>
<dbReference type="PDBsum" id="5WIT"/>
<dbReference type="PDBsum" id="5ZLU"/>
<dbReference type="PDBsum" id="6BUW"/>
<dbReference type="PDBsum" id="6BZ6"/>
<dbReference type="PDBsum" id="6BZ7"/>
<dbReference type="PDBsum" id="6BZ8"/>
<dbReference type="PDBsum" id="6C5L"/>
<dbReference type="PDBsum" id="6CAE"/>
<dbReference type="PDBsum" id="6CFJ"/>
<dbReference type="PDBsum" id="6CFK"/>
<dbReference type="PDBsum" id="6CFL"/>
<dbReference type="PDBsum" id="6CZR"/>
<dbReference type="PDBsum" id="6FKR"/>
<dbReference type="PDBsum" id="6GSJ"/>
<dbReference type="PDBsum" id="6GSK"/>
<dbReference type="PDBsum" id="6GSL"/>
<dbReference type="PDBsum" id="6GZQ"/>
<dbReference type="PDBsum" id="6GZX"/>
<dbReference type="PDBsum" id="6GZZ"/>
<dbReference type="PDBsum" id="6N9E"/>
<dbReference type="PDBsum" id="6N9F"/>
<dbReference type="PDBsum" id="6ND5"/>
<dbReference type="PDBsum" id="6ND6"/>
<dbReference type="PDBsum" id="6NDK"/>
<dbReference type="PDBsum" id="6NSH"/>
<dbReference type="PDBsum" id="6NTA"/>
<dbReference type="PDBsum" id="6NUO"/>
<dbReference type="PDBsum" id="6NWY"/>
<dbReference type="PDBsum" id="6O3M"/>
<dbReference type="PDBsum" id="6O97"/>
<dbReference type="PDBsum" id="6OF1"/>
<dbReference type="PDBsum" id="6OF6"/>
<dbReference type="PDBsum" id="6OJ2"/>
<dbReference type="PDBsum" id="6OPE"/>
<dbReference type="PDBsum" id="6ORD"/>
<dbReference type="PDBsum" id="6OSI"/>
<dbReference type="PDBsum" id="6OTR"/>
<dbReference type="PDBsum" id="6OXA"/>
<dbReference type="PDBsum" id="6OXI"/>
<dbReference type="PDBsum" id="6Q95"/>
<dbReference type="PDBsum" id="6QNQ"/>
<dbReference type="PDBsum" id="6QNR"/>
<dbReference type="PDBsum" id="6UCQ"/>
<dbReference type="PDBsum" id="6UO1"/>
<dbReference type="PDBsum" id="6XHV"/>
<dbReference type="PDBsum" id="6XHW"/>
<dbReference type="PDBsum" id="6XHX"/>
<dbReference type="PDBsum" id="6XHY"/>
<dbReference type="PDBsum" id="6XQD"/>
<dbReference type="PDBsum" id="6XQE"/>
<dbReference type="PDBsum" id="7AZO"/>
<dbReference type="PDBsum" id="7AZS"/>
<dbReference type="PDBsum" id="7JQL"/>
<dbReference type="PDBsum" id="7JQM"/>
<dbReference type="PDBsum" id="7LH5"/>
<dbReference type="PDBsum" id="7MD7"/>
<dbReference type="PDBsum" id="7RQ8"/>
<dbReference type="PDBsum" id="7RQ9"/>
<dbReference type="PDBsum" id="7RQA"/>
<dbReference type="PDBsum" id="7RQB"/>
<dbReference type="PDBsum" id="7RQC"/>
<dbReference type="PDBsum" id="7RQD"/>
<dbReference type="PDBsum" id="7RQE"/>
<dbReference type="PDBsum" id="7U2H"/>
<dbReference type="PDBsum" id="7U2I"/>
<dbReference type="PDBsum" id="7U2J"/>
<dbReference type="PDBsum" id="8CVJ"/>
<dbReference type="PDBsum" id="8CVK"/>
<dbReference type="PDBsum" id="8CVL"/>
<dbReference type="PDBsum" id="8EKB"/>
<dbReference type="PDBsum" id="8EV6"/>
<dbReference type="PDBsum" id="8EV7"/>
<dbReference type="PDBsum" id="8FC1"/>
<dbReference type="PDBsum" id="8FC2"/>
<dbReference type="PDBsum" id="8FC3"/>
<dbReference type="PDBsum" id="8FC4"/>
<dbReference type="PDBsum" id="8FC5"/>
<dbReference type="PDBsum" id="8FC6"/>
<dbReference type="PDBsum" id="8FOM"/>
<dbReference type="PDBsum" id="8FON"/>
<dbReference type="PDBsum" id="8G29"/>
<dbReference type="PDBsum" id="8G2A"/>
<dbReference type="PDBsum" id="8G2B"/>
<dbReference type="PDBsum" id="8G2C"/>
<dbReference type="PDBsum" id="8G2D"/>
<dbReference type="PDBsum" id="8T8B"/>
<dbReference type="PDBsum" id="8T8C"/>
<dbReference type="PDBsum" id="8UD6"/>
<dbReference type="PDBsum" id="8UD7"/>
<dbReference type="PDBsum" id="8UD8"/>
<dbReference type="PDBsum" id="8UVR"/>
<dbReference type="PDBsum" id="8UVS"/>
<dbReference type="PDBsum" id="8VTU"/>
<dbReference type="PDBsum" id="8VTV"/>
<dbReference type="PDBsum" id="8VTW"/>
<dbReference type="PDBsum" id="8VTX"/>
<dbReference type="PDBsum" id="8VTY"/>
<dbReference type="PDBsum" id="8WV1"/>
<dbReference type="PDBsum" id="9B00"/>
<dbReference type="PDBsum" id="9D0J"/>
<dbReference type="PDBsum" id="9D7R"/>
<dbReference type="PDBsum" id="9D7S"/>
<dbReference type="PDBsum" id="9D7T"/>
<dbReference type="PDBsum" id="9DFC"/>
<dbReference type="PDBsum" id="9DFD"/>
<dbReference type="PDBsum" id="9DFE"/>
<dbReference type="EMDB" id="EMD-0101"/>
<dbReference type="EMDB" id="EMD-0104"/>
<dbReference type="EMDB" id="EMD-0105"/>
<dbReference type="EMDB" id="EMD-3852"/>
<dbReference type="EMDB" id="EMD-4475"/>
<dbReference type="EMDB" id="EMD-6934"/>
<dbReference type="EMDB" id="EMD-8596"/>
<dbReference type="EMDB" id="EMD-8597"/>
<dbReference type="SMR" id="Q5SJE1"/>
<dbReference type="IntAct" id="Q5SJE1">
    <property type="interactions" value="8"/>
</dbReference>
<dbReference type="EnsemblBacteria" id="BAD70896">
    <property type="protein sequence ID" value="BAD70896"/>
    <property type="gene ID" value="BAD70896"/>
</dbReference>
<dbReference type="GeneID" id="3168247"/>
<dbReference type="KEGG" id="ttj:TTHA1073"/>
<dbReference type="PATRIC" id="fig|300852.9.peg.1053"/>
<dbReference type="eggNOG" id="COG0254">
    <property type="taxonomic scope" value="Bacteria"/>
</dbReference>
<dbReference type="HOGENOM" id="CLU_114306_4_2_0"/>
<dbReference type="PhylomeDB" id="Q5SJE1"/>
<dbReference type="Proteomes" id="UP000000532">
    <property type="component" value="Chromosome"/>
</dbReference>
<dbReference type="GO" id="GO:1990904">
    <property type="term" value="C:ribonucleoprotein complex"/>
    <property type="evidence" value="ECO:0007669"/>
    <property type="project" value="UniProtKB-KW"/>
</dbReference>
<dbReference type="GO" id="GO:0005840">
    <property type="term" value="C:ribosome"/>
    <property type="evidence" value="ECO:0007669"/>
    <property type="project" value="UniProtKB-KW"/>
</dbReference>
<dbReference type="GO" id="GO:0046872">
    <property type="term" value="F:metal ion binding"/>
    <property type="evidence" value="ECO:0007669"/>
    <property type="project" value="UniProtKB-KW"/>
</dbReference>
<dbReference type="GO" id="GO:0019843">
    <property type="term" value="F:rRNA binding"/>
    <property type="evidence" value="ECO:0007669"/>
    <property type="project" value="UniProtKB-KW"/>
</dbReference>
<dbReference type="GO" id="GO:0003735">
    <property type="term" value="F:structural constituent of ribosome"/>
    <property type="evidence" value="ECO:0007669"/>
    <property type="project" value="InterPro"/>
</dbReference>
<dbReference type="GO" id="GO:0006412">
    <property type="term" value="P:translation"/>
    <property type="evidence" value="ECO:0007669"/>
    <property type="project" value="UniProtKB-UniRule"/>
</dbReference>
<dbReference type="Gene3D" id="4.10.830.30">
    <property type="entry name" value="Ribosomal protein L31"/>
    <property type="match status" value="1"/>
</dbReference>
<dbReference type="HAMAP" id="MF_00501">
    <property type="entry name" value="Ribosomal_bL31_1"/>
    <property type="match status" value="1"/>
</dbReference>
<dbReference type="InterPro" id="IPR034704">
    <property type="entry name" value="Ribosomal_bL28/bL31-like_sf"/>
</dbReference>
<dbReference type="InterPro" id="IPR002150">
    <property type="entry name" value="Ribosomal_bL31"/>
</dbReference>
<dbReference type="InterPro" id="IPR027491">
    <property type="entry name" value="Ribosomal_bL31_A"/>
</dbReference>
<dbReference type="InterPro" id="IPR042105">
    <property type="entry name" value="Ribosomal_bL31_sf"/>
</dbReference>
<dbReference type="NCBIfam" id="TIGR00105">
    <property type="entry name" value="L31"/>
    <property type="match status" value="1"/>
</dbReference>
<dbReference type="NCBIfam" id="NF000612">
    <property type="entry name" value="PRK00019.1"/>
    <property type="match status" value="1"/>
</dbReference>
<dbReference type="NCBIfam" id="NF001809">
    <property type="entry name" value="PRK00528.1"/>
    <property type="match status" value="1"/>
</dbReference>
<dbReference type="PANTHER" id="PTHR33280">
    <property type="entry name" value="50S RIBOSOMAL PROTEIN L31, CHLOROPLASTIC"/>
    <property type="match status" value="1"/>
</dbReference>
<dbReference type="PANTHER" id="PTHR33280:SF1">
    <property type="entry name" value="LARGE RIBOSOMAL SUBUNIT PROTEIN BL31C"/>
    <property type="match status" value="1"/>
</dbReference>
<dbReference type="Pfam" id="PF01197">
    <property type="entry name" value="Ribosomal_L31"/>
    <property type="match status" value="1"/>
</dbReference>
<dbReference type="PRINTS" id="PR01249">
    <property type="entry name" value="RIBOSOMALL31"/>
</dbReference>
<dbReference type="SUPFAM" id="SSF143800">
    <property type="entry name" value="L28p-like"/>
    <property type="match status" value="1"/>
</dbReference>
<dbReference type="PROSITE" id="PS01143">
    <property type="entry name" value="RIBOSOMAL_L31"/>
    <property type="match status" value="1"/>
</dbReference>
<reference key="1">
    <citation type="submission" date="2004-11" db="EMBL/GenBank/DDBJ databases">
        <title>Complete genome sequence of Thermus thermophilus HB8.</title>
        <authorList>
            <person name="Masui R."/>
            <person name="Kurokawa K."/>
            <person name="Nakagawa N."/>
            <person name="Tokunaga F."/>
            <person name="Koyama Y."/>
            <person name="Shibata T."/>
            <person name="Oshima T."/>
            <person name="Yokoyama S."/>
            <person name="Yasunaga T."/>
            <person name="Kuramitsu S."/>
        </authorList>
    </citation>
    <scope>NUCLEOTIDE SEQUENCE [LARGE SCALE GENOMIC DNA]</scope>
    <source>
        <strain>ATCC 27634 / DSM 579 / HB8</strain>
    </source>
</reference>
<reference key="2">
    <citation type="journal article" date="2005" name="Proteomics">
        <title>Extending ribosomal protein identifications to unsequenced bacterial strains using matrix-assisted laser desorption/ionization mass spectrometry.</title>
        <authorList>
            <person name="Suh M.-J."/>
            <person name="Hamburg D.M."/>
            <person name="Gregory S.T."/>
            <person name="Dahlberg A.E."/>
            <person name="Limbach P.A."/>
        </authorList>
    </citation>
    <scope>MASS SPECTROMETRY</scope>
    <source>
        <strain>ATCC 27634 / DSM 579 / HB8</strain>
    </source>
</reference>
<reference key="3">
    <citation type="journal article" date="2008" name="Science">
        <title>Insights into translational termination from the structure of RF2 bound to the ribosome.</title>
        <authorList>
            <person name="Weixlbaumer A."/>
            <person name="Jin H."/>
            <person name="Neubauer C."/>
            <person name="Voorhees R.M."/>
            <person name="Petry S."/>
            <person name="Kelley A.C."/>
            <person name="Ramakrishnan V."/>
        </authorList>
    </citation>
    <scope>X-RAY CRYSTALLOGRAPHY (3.45 ANGSTROMS) OF 70S RIBOSOME IN COMPLEX WITH RF2</scope>
    <scope>SUBUNIT</scope>
</reference>
<reference key="4">
    <citation type="journal article" date="2010" name="Proc. Natl. Acad. Sci. U.S.A.">
        <title>Structure of the 70S ribosome bound to release factor 2 and a substrate analog provides insights into catalysis of peptide release.</title>
        <authorList>
            <person name="Jin H."/>
            <person name="Kelley A.C."/>
            <person name="Loakes D."/>
            <person name="Ramakrishnan V."/>
        </authorList>
    </citation>
    <scope>X-RAY CRYSTALLOGRAPHY (3.10 ANGSTROMS) OF 70S RIBOSOME IN COMPLEX WITH RF2</scope>
    <scope>SUBUNIT</scope>
</reference>